<geneLocation type="chloroplast"/>
<keyword id="KW-0148">Chlorophyll</keyword>
<keyword id="KW-0150">Chloroplast</keyword>
<keyword id="KW-0157">Chromophore</keyword>
<keyword id="KW-0472">Membrane</keyword>
<keyword id="KW-0602">Photosynthesis</keyword>
<keyword id="KW-0604">Photosystem II</keyword>
<keyword id="KW-0934">Plastid</keyword>
<keyword id="KW-0793">Thylakoid</keyword>
<keyword id="KW-0812">Transmembrane</keyword>
<keyword id="KW-1133">Transmembrane helix</keyword>
<proteinExistence type="inferred from homology"/>
<protein>
    <recommendedName>
        <fullName evidence="1">Photosystem II CP47 reaction center protein</fullName>
    </recommendedName>
    <alternativeName>
        <fullName evidence="1">PSII 47 kDa protein</fullName>
    </alternativeName>
    <alternativeName>
        <fullName evidence="1">Protein CP-47</fullName>
    </alternativeName>
</protein>
<name>PSBB_MANES</name>
<organism>
    <name type="scientific">Manihot esculenta</name>
    <name type="common">Cassava</name>
    <name type="synonym">Jatropha manihot</name>
    <dbReference type="NCBI Taxonomy" id="3983"/>
    <lineage>
        <taxon>Eukaryota</taxon>
        <taxon>Viridiplantae</taxon>
        <taxon>Streptophyta</taxon>
        <taxon>Embryophyta</taxon>
        <taxon>Tracheophyta</taxon>
        <taxon>Spermatophyta</taxon>
        <taxon>Magnoliopsida</taxon>
        <taxon>eudicotyledons</taxon>
        <taxon>Gunneridae</taxon>
        <taxon>Pentapetalae</taxon>
        <taxon>rosids</taxon>
        <taxon>fabids</taxon>
        <taxon>Malpighiales</taxon>
        <taxon>Euphorbiaceae</taxon>
        <taxon>Crotonoideae</taxon>
        <taxon>Manihoteae</taxon>
        <taxon>Manihot</taxon>
    </lineage>
</organism>
<reference key="1">
    <citation type="journal article" date="2008" name="Theor. Appl. Genet.">
        <title>The complete nucleotide sequence of the cassava (Manihot esculenta) chloroplast genome and the evolution of atpF in Malpighiales: RNA editing and multiple losses of a group II intron.</title>
        <authorList>
            <person name="Daniell H."/>
            <person name="Wurdack K.J."/>
            <person name="Kanagaraj A."/>
            <person name="Lee S.-B."/>
            <person name="Saski C."/>
            <person name="Jansen R.K."/>
        </authorList>
    </citation>
    <scope>NUCLEOTIDE SEQUENCE [LARGE SCALE GENOMIC DNA]</scope>
    <source>
        <strain>cv. TME3</strain>
    </source>
</reference>
<feature type="chain" id="PRO_0000359839" description="Photosystem II CP47 reaction center protein">
    <location>
        <begin position="1"/>
        <end position="508"/>
    </location>
</feature>
<feature type="transmembrane region" description="Helical" evidence="1">
    <location>
        <begin position="21"/>
        <end position="36"/>
    </location>
</feature>
<feature type="transmembrane region" description="Helical" evidence="1">
    <location>
        <begin position="101"/>
        <end position="115"/>
    </location>
</feature>
<feature type="transmembrane region" description="Helical" evidence="1">
    <location>
        <begin position="140"/>
        <end position="156"/>
    </location>
</feature>
<feature type="transmembrane region" description="Helical" evidence="1">
    <location>
        <begin position="203"/>
        <end position="218"/>
    </location>
</feature>
<feature type="transmembrane region" description="Helical" evidence="1">
    <location>
        <begin position="237"/>
        <end position="252"/>
    </location>
</feature>
<feature type="transmembrane region" description="Helical" evidence="1">
    <location>
        <begin position="457"/>
        <end position="472"/>
    </location>
</feature>
<dbReference type="EMBL" id="EU117376">
    <property type="protein sequence ID" value="ABV66180.1"/>
    <property type="molecule type" value="Genomic_DNA"/>
</dbReference>
<dbReference type="RefSeq" id="YP_001718463.1">
    <property type="nucleotide sequence ID" value="NC_010433.1"/>
</dbReference>
<dbReference type="SMR" id="B1NWH6"/>
<dbReference type="GeneID" id="5999952"/>
<dbReference type="KEGG" id="mesc:5999952"/>
<dbReference type="OrthoDB" id="1843417at2759"/>
<dbReference type="GO" id="GO:0009535">
    <property type="term" value="C:chloroplast thylakoid membrane"/>
    <property type="evidence" value="ECO:0007669"/>
    <property type="project" value="UniProtKB-SubCell"/>
</dbReference>
<dbReference type="GO" id="GO:0009523">
    <property type="term" value="C:photosystem II"/>
    <property type="evidence" value="ECO:0007669"/>
    <property type="project" value="UniProtKB-KW"/>
</dbReference>
<dbReference type="GO" id="GO:0016168">
    <property type="term" value="F:chlorophyll binding"/>
    <property type="evidence" value="ECO:0007669"/>
    <property type="project" value="UniProtKB-UniRule"/>
</dbReference>
<dbReference type="GO" id="GO:0045156">
    <property type="term" value="F:electron transporter, transferring electrons within the cyclic electron transport pathway of photosynthesis activity"/>
    <property type="evidence" value="ECO:0007669"/>
    <property type="project" value="InterPro"/>
</dbReference>
<dbReference type="GO" id="GO:0009772">
    <property type="term" value="P:photosynthetic electron transport in photosystem II"/>
    <property type="evidence" value="ECO:0007669"/>
    <property type="project" value="InterPro"/>
</dbReference>
<dbReference type="FunFam" id="3.10.680.10:FF:000001">
    <property type="entry name" value="Photosystem II CP47 reaction center protein"/>
    <property type="match status" value="1"/>
</dbReference>
<dbReference type="Gene3D" id="3.10.680.10">
    <property type="entry name" value="Photosystem II CP47 reaction center protein"/>
    <property type="match status" value="1"/>
</dbReference>
<dbReference type="HAMAP" id="MF_01495">
    <property type="entry name" value="PSII_PsbB_CP47"/>
    <property type="match status" value="1"/>
</dbReference>
<dbReference type="InterPro" id="IPR000932">
    <property type="entry name" value="PS_antenna-like"/>
</dbReference>
<dbReference type="InterPro" id="IPR036001">
    <property type="entry name" value="PS_II_antenna-like_sf"/>
</dbReference>
<dbReference type="InterPro" id="IPR017486">
    <property type="entry name" value="PSII_PsbB"/>
</dbReference>
<dbReference type="NCBIfam" id="TIGR03039">
    <property type="entry name" value="PS_II_CP47"/>
    <property type="match status" value="1"/>
</dbReference>
<dbReference type="PANTHER" id="PTHR33180">
    <property type="entry name" value="PHOTOSYSTEM II CP43 REACTION CENTER PROTEIN"/>
    <property type="match status" value="1"/>
</dbReference>
<dbReference type="PANTHER" id="PTHR33180:SF38">
    <property type="entry name" value="PHOTOSYSTEM II CP47 REACTION CENTER PROTEIN"/>
    <property type="match status" value="1"/>
</dbReference>
<dbReference type="Pfam" id="PF00421">
    <property type="entry name" value="PSII"/>
    <property type="match status" value="1"/>
</dbReference>
<dbReference type="SUPFAM" id="SSF161077">
    <property type="entry name" value="Photosystem II antenna protein-like"/>
    <property type="match status" value="1"/>
</dbReference>
<comment type="function">
    <text evidence="1">One of the components of the core complex of photosystem II (PSII). It binds chlorophyll and helps catalyze the primary light-induced photochemical processes of PSII. PSII is a light-driven water:plastoquinone oxidoreductase, using light energy to abstract electrons from H(2)O, generating O(2) and a proton gradient subsequently used for ATP formation.</text>
</comment>
<comment type="cofactor">
    <text evidence="1">Binds multiple chlorophylls. PSII binds additional chlorophylls, carotenoids and specific lipids.</text>
</comment>
<comment type="subunit">
    <text evidence="1">PSII is composed of 1 copy each of membrane proteins PsbA, PsbB, PsbC, PsbD, PsbE, PsbF, PsbH, PsbI, PsbJ, PsbK, PsbL, PsbM, PsbT, PsbX, PsbY, PsbZ, Psb30/Ycf12, at least 3 peripheral proteins of the oxygen-evolving complex and a large number of cofactors. It forms dimeric complexes.</text>
</comment>
<comment type="subcellular location">
    <subcellularLocation>
        <location evidence="1">Plastid</location>
        <location evidence="1">Chloroplast thylakoid membrane</location>
        <topology evidence="1">Multi-pass membrane protein</topology>
    </subcellularLocation>
</comment>
<comment type="similarity">
    <text evidence="1">Belongs to the PsbB/PsbC family. PsbB subfamily.</text>
</comment>
<gene>
    <name evidence="1" type="primary">psbB</name>
</gene>
<accession>B1NWH6</accession>
<sequence length="508" mass="56114">MGLPWYRVHTVVLNDPGRLLSVHIMHTALVAGWAGSMALYELAVFDPSDPVLDPMWRQGMFVIPFMTRLGITNSWGGWSITGGTITNPGIWSYEGVAGAHIVFSGLCFLAAIWHWVYWDLEIFCDERTGKPSLDLPKIFGIHLFLSGVACFGFGAFHVTGLYGPGIWVSDPYGLTGKVQPVSPAWGVEGFDPFVPGGIASHHIAAGTLGILAGLFHLSVRPPQRLYKGLRMGNIETVLSSSIAAVFFAAFVVAGTMWYGSATTPIELFGPTRYQWDQGYFQQEIYRRVSAGLAENQSLSEAWSKIPEKLAFYDYIGNNPAKGGLFRAGSMDNGDGIAVGWLGHPIFRDKEGRELFVRRMPTFFETFPVVLVDGDGIVRADVPFRRAESKYSVEQVGVTVEFYGGELNGVSYSDPVTVKKYARRAQLGEIFELDRATLKSDGVFRSSPRGWFTFGHASFALLFFFGHIWHGARTLFRDVFAGIDPDLDAQVEFGAFQKLGDPTTRRQVV</sequence>
<evidence type="ECO:0000255" key="1">
    <source>
        <dbReference type="HAMAP-Rule" id="MF_01495"/>
    </source>
</evidence>